<proteinExistence type="inferred from homology"/>
<sequence>MWISYLGFLIFYFILAAASYKILKRIKWI</sequence>
<dbReference type="EMBL" id="AB002583">
    <property type="protein sequence ID" value="BAC76296.1"/>
    <property type="molecule type" value="Genomic_DNA"/>
</dbReference>
<dbReference type="RefSeq" id="NP_849134.1">
    <property type="nucleotide sequence ID" value="NC_004799.1"/>
</dbReference>
<dbReference type="SMR" id="Q85FP9"/>
<dbReference type="STRING" id="280699.Q85FP9"/>
<dbReference type="EnsemblPlants" id="CMV235CT">
    <property type="protein sequence ID" value="CMV235CT"/>
    <property type="gene ID" value="CMV235C"/>
</dbReference>
<dbReference type="GeneID" id="844931"/>
<dbReference type="Gramene" id="CMV235CT">
    <property type="protein sequence ID" value="CMV235CT"/>
    <property type="gene ID" value="CMV235C"/>
</dbReference>
<dbReference type="KEGG" id="cme:CymeCp202"/>
<dbReference type="HOGENOM" id="CLU_3411050_0_0_1"/>
<dbReference type="Proteomes" id="UP000007014">
    <property type="component" value="Chloroplast"/>
</dbReference>
<dbReference type="GO" id="GO:0009535">
    <property type="term" value="C:chloroplast thylakoid membrane"/>
    <property type="evidence" value="ECO:0007669"/>
    <property type="project" value="UniProtKB-SubCell"/>
</dbReference>
<dbReference type="GO" id="GO:0015979">
    <property type="term" value="P:photosynthesis"/>
    <property type="evidence" value="ECO:0007669"/>
    <property type="project" value="UniProtKB-KW"/>
</dbReference>
<protein>
    <recommendedName>
        <fullName>Cytochrome b6-f complex subunit 6</fullName>
    </recommendedName>
    <alternativeName>
        <fullName>Cytochrome b6-f complex subunit PetL</fullName>
    </alternativeName>
    <alternativeName>
        <fullName>Cytochrome b6-f complex subunit VI</fullName>
    </alternativeName>
</protein>
<accession>Q85FP9</accession>
<feature type="chain" id="PRO_0000220447" description="Cytochrome b6-f complex subunit 6">
    <location>
        <begin position="1"/>
        <end position="29"/>
    </location>
</feature>
<feature type="transmembrane region" description="Helical" evidence="2">
    <location>
        <begin position="3"/>
        <end position="23"/>
    </location>
</feature>
<gene>
    <name type="primary">petL</name>
</gene>
<keyword id="KW-0150">Chloroplast</keyword>
<keyword id="KW-0249">Electron transport</keyword>
<keyword id="KW-0472">Membrane</keyword>
<keyword id="KW-0602">Photosynthesis</keyword>
<keyword id="KW-0934">Plastid</keyword>
<keyword id="KW-1185">Reference proteome</keyword>
<keyword id="KW-0793">Thylakoid</keyword>
<keyword id="KW-0812">Transmembrane</keyword>
<keyword id="KW-1133">Transmembrane helix</keyword>
<keyword id="KW-0813">Transport</keyword>
<comment type="function">
    <text evidence="1">Component of the cytochrome b6-f complex, which mediates electron transfer between photosystem II (PSII) and photosystem I (PSI), cyclic electron flow around PSI, and state transitions. PetL is important for photoautotrophic growth as well as for electron transfer efficiency and stability of the cytochrome b6-f complex (By similarity).</text>
</comment>
<comment type="subunit">
    <text evidence="1">The 4 large subunits of the cytochrome b6-f complex are cytochrome b6, subunit IV (17 kDa polypeptide, PetD), cytochrome f and the Rieske protein, while the 4 small subunits are PetG, PetL, PetM and PetN. The complex functions as a dimer (By similarity).</text>
</comment>
<comment type="subcellular location">
    <subcellularLocation>
        <location evidence="1">Plastid</location>
        <location evidence="1">Chloroplast thylakoid membrane</location>
        <topology evidence="1">Single-pass membrane protein</topology>
    </subcellularLocation>
</comment>
<comment type="similarity">
    <text evidence="3">Belongs to the PetL family.</text>
</comment>
<organism>
    <name type="scientific">Cyanidioschyzon merolae (strain NIES-3377 / 10D)</name>
    <name type="common">Unicellular red alga</name>
    <dbReference type="NCBI Taxonomy" id="280699"/>
    <lineage>
        <taxon>Eukaryota</taxon>
        <taxon>Rhodophyta</taxon>
        <taxon>Bangiophyceae</taxon>
        <taxon>Cyanidiales</taxon>
        <taxon>Cyanidiaceae</taxon>
        <taxon>Cyanidioschyzon</taxon>
    </lineage>
</organism>
<geneLocation type="chloroplast"/>
<name>PETL_CYAM1</name>
<evidence type="ECO:0000250" key="1"/>
<evidence type="ECO:0000255" key="2"/>
<evidence type="ECO:0000305" key="3"/>
<reference key="1">
    <citation type="journal article" date="2003" name="DNA Res.">
        <title>Complete sequence and analysis of the plastid genome of the unicellular red alga Cyanidioschyzon merolae.</title>
        <authorList>
            <person name="Ohta N."/>
            <person name="Matsuzaki M."/>
            <person name="Misumi O."/>
            <person name="Miyagishima S.-Y."/>
            <person name="Nozaki H."/>
            <person name="Tanaka K."/>
            <person name="Shin-i T."/>
            <person name="Kohara Y."/>
            <person name="Kuroiwa T."/>
        </authorList>
    </citation>
    <scope>NUCLEOTIDE SEQUENCE [LARGE SCALE GENOMIC DNA]</scope>
    <source>
        <strain>NIES-3377 / 10D</strain>
    </source>
</reference>